<evidence type="ECO:0000255" key="1">
    <source>
        <dbReference type="HAMAP-Rule" id="MF_00145"/>
    </source>
</evidence>
<protein>
    <recommendedName>
        <fullName evidence="1">Phosphoglycerate kinase</fullName>
        <ecNumber evidence="1">2.7.2.3</ecNumber>
    </recommendedName>
</protein>
<feature type="chain" id="PRO_0000145949" description="Phosphoglycerate kinase">
    <location>
        <begin position="1"/>
        <end position="402"/>
    </location>
</feature>
<feature type="binding site" evidence="1">
    <location>
        <begin position="30"/>
        <end position="32"/>
    </location>
    <ligand>
        <name>substrate</name>
    </ligand>
</feature>
<feature type="binding site" evidence="1">
    <location>
        <position position="46"/>
    </location>
    <ligand>
        <name>substrate</name>
    </ligand>
</feature>
<feature type="binding site" evidence="1">
    <location>
        <begin position="70"/>
        <end position="73"/>
    </location>
    <ligand>
        <name>substrate</name>
    </ligand>
</feature>
<feature type="binding site" evidence="1">
    <location>
        <position position="126"/>
    </location>
    <ligand>
        <name>substrate</name>
    </ligand>
</feature>
<feature type="binding site" evidence="1">
    <location>
        <position position="159"/>
    </location>
    <ligand>
        <name>substrate</name>
    </ligand>
</feature>
<feature type="binding site" evidence="1">
    <location>
        <position position="210"/>
    </location>
    <ligand>
        <name>ATP</name>
        <dbReference type="ChEBI" id="CHEBI:30616"/>
    </ligand>
</feature>
<feature type="binding site" evidence="1">
    <location>
        <position position="332"/>
    </location>
    <ligand>
        <name>ATP</name>
        <dbReference type="ChEBI" id="CHEBI:30616"/>
    </ligand>
</feature>
<feature type="binding site" evidence="1">
    <location>
        <begin position="358"/>
        <end position="361"/>
    </location>
    <ligand>
        <name>ATP</name>
        <dbReference type="ChEBI" id="CHEBI:30616"/>
    </ligand>
</feature>
<keyword id="KW-0067">ATP-binding</keyword>
<keyword id="KW-0963">Cytoplasm</keyword>
<keyword id="KW-0324">Glycolysis</keyword>
<keyword id="KW-0418">Kinase</keyword>
<keyword id="KW-0547">Nucleotide-binding</keyword>
<keyword id="KW-1185">Reference proteome</keyword>
<keyword id="KW-0808">Transferase</keyword>
<name>PGK_HELHP</name>
<gene>
    <name evidence="1" type="primary">pgk</name>
    <name type="ordered locus">HH_0327</name>
</gene>
<comment type="catalytic activity">
    <reaction evidence="1">
        <text>(2R)-3-phosphoglycerate + ATP = (2R)-3-phospho-glyceroyl phosphate + ADP</text>
        <dbReference type="Rhea" id="RHEA:14801"/>
        <dbReference type="ChEBI" id="CHEBI:30616"/>
        <dbReference type="ChEBI" id="CHEBI:57604"/>
        <dbReference type="ChEBI" id="CHEBI:58272"/>
        <dbReference type="ChEBI" id="CHEBI:456216"/>
        <dbReference type="EC" id="2.7.2.3"/>
    </reaction>
</comment>
<comment type="pathway">
    <text evidence="1">Carbohydrate degradation; glycolysis; pyruvate from D-glyceraldehyde 3-phosphate: step 2/5.</text>
</comment>
<comment type="subunit">
    <text evidence="1">Monomer.</text>
</comment>
<comment type="subcellular location">
    <subcellularLocation>
        <location evidence="1">Cytoplasm</location>
    </subcellularLocation>
</comment>
<comment type="similarity">
    <text evidence="1">Belongs to the phosphoglycerate kinase family.</text>
</comment>
<organism>
    <name type="scientific">Helicobacter hepaticus (strain ATCC 51449 / 3B1)</name>
    <dbReference type="NCBI Taxonomy" id="235279"/>
    <lineage>
        <taxon>Bacteria</taxon>
        <taxon>Pseudomonadati</taxon>
        <taxon>Campylobacterota</taxon>
        <taxon>Epsilonproteobacteria</taxon>
        <taxon>Campylobacterales</taxon>
        <taxon>Helicobacteraceae</taxon>
        <taxon>Helicobacter</taxon>
    </lineage>
</organism>
<accession>Q7VJB6</accession>
<proteinExistence type="inferred from homology"/>
<reference key="1">
    <citation type="journal article" date="2003" name="Proc. Natl. Acad. Sci. U.S.A.">
        <title>The complete genome sequence of the carcinogenic bacterium Helicobacter hepaticus.</title>
        <authorList>
            <person name="Suerbaum S."/>
            <person name="Josenhans C."/>
            <person name="Sterzenbach T."/>
            <person name="Drescher B."/>
            <person name="Brandt P."/>
            <person name="Bell M."/>
            <person name="Droege M."/>
            <person name="Fartmann B."/>
            <person name="Fischer H.-P."/>
            <person name="Ge Z."/>
            <person name="Hoerster A."/>
            <person name="Holland R."/>
            <person name="Klein K."/>
            <person name="Koenig J."/>
            <person name="Macko L."/>
            <person name="Mendz G.L."/>
            <person name="Nyakatura G."/>
            <person name="Schauer D.B."/>
            <person name="Shen Z."/>
            <person name="Weber J."/>
            <person name="Frosch M."/>
            <person name="Fox J.G."/>
        </authorList>
    </citation>
    <scope>NUCLEOTIDE SEQUENCE [LARGE SCALE GENOMIC DNA]</scope>
    <source>
        <strain>ATCC 51449 / 3B1</strain>
    </source>
</reference>
<sequence length="402" mass="44464">MKETGIELMKNTKSVRDIDVKDKRVLIRVDFNVPMDEDFDISDDTRIREALPTINYCIDNHAQNIVLVSHLGRPKGRNAEFSLKHVLKRVERLLGRDIAFAETIENVENLQQQSKSGSVILLENIRFYEGEEKNDEELSTKLASICDVYINDAFGTSHRAHSSTCGIAKYAKECVAGLLLKKEIDSFAKAMANPLKPVLLIVGGSKVSSKLALLYNILDVVDKIIIGGAMSNTFLKARGFDMQKSLVEDDLVSEARKILDKAKEKKVKIYLPVDVVSTDDIKEHRHIKITPAQDIPEGFMAVDMGPATSKLFSEVVRDSQTIIWNGPLGIYEIQAFSRGTFNLAHAVSDTYAFSLIGGGDTADAIDKAGERDNMSFISTGGGASLELLEGKILPAFEVLERK</sequence>
<dbReference type="EC" id="2.7.2.3" evidence="1"/>
<dbReference type="EMBL" id="AE017125">
    <property type="protein sequence ID" value="AAP76924.1"/>
    <property type="molecule type" value="Genomic_DNA"/>
</dbReference>
<dbReference type="RefSeq" id="WP_011115170.1">
    <property type="nucleotide sequence ID" value="NC_004917.1"/>
</dbReference>
<dbReference type="SMR" id="Q7VJB6"/>
<dbReference type="STRING" id="235279.HH_0327"/>
<dbReference type="KEGG" id="hhe:HH_0327"/>
<dbReference type="eggNOG" id="COG0126">
    <property type="taxonomic scope" value="Bacteria"/>
</dbReference>
<dbReference type="HOGENOM" id="CLU_025427_0_2_7"/>
<dbReference type="OrthoDB" id="9808460at2"/>
<dbReference type="UniPathway" id="UPA00109">
    <property type="reaction ID" value="UER00185"/>
</dbReference>
<dbReference type="Proteomes" id="UP000002495">
    <property type="component" value="Chromosome"/>
</dbReference>
<dbReference type="GO" id="GO:0005829">
    <property type="term" value="C:cytosol"/>
    <property type="evidence" value="ECO:0007669"/>
    <property type="project" value="TreeGrafter"/>
</dbReference>
<dbReference type="GO" id="GO:0043531">
    <property type="term" value="F:ADP binding"/>
    <property type="evidence" value="ECO:0007669"/>
    <property type="project" value="TreeGrafter"/>
</dbReference>
<dbReference type="GO" id="GO:0005524">
    <property type="term" value="F:ATP binding"/>
    <property type="evidence" value="ECO:0007669"/>
    <property type="project" value="UniProtKB-KW"/>
</dbReference>
<dbReference type="GO" id="GO:0004618">
    <property type="term" value="F:phosphoglycerate kinase activity"/>
    <property type="evidence" value="ECO:0007669"/>
    <property type="project" value="UniProtKB-UniRule"/>
</dbReference>
<dbReference type="GO" id="GO:0006094">
    <property type="term" value="P:gluconeogenesis"/>
    <property type="evidence" value="ECO:0007669"/>
    <property type="project" value="TreeGrafter"/>
</dbReference>
<dbReference type="GO" id="GO:0006096">
    <property type="term" value="P:glycolytic process"/>
    <property type="evidence" value="ECO:0007669"/>
    <property type="project" value="UniProtKB-UniRule"/>
</dbReference>
<dbReference type="FunFam" id="3.40.50.1260:FF:000006">
    <property type="entry name" value="Phosphoglycerate kinase"/>
    <property type="match status" value="1"/>
</dbReference>
<dbReference type="FunFam" id="3.40.50.1260:FF:000012">
    <property type="entry name" value="Phosphoglycerate kinase"/>
    <property type="match status" value="1"/>
</dbReference>
<dbReference type="Gene3D" id="3.40.50.1260">
    <property type="entry name" value="Phosphoglycerate kinase, N-terminal domain"/>
    <property type="match status" value="2"/>
</dbReference>
<dbReference type="HAMAP" id="MF_00145">
    <property type="entry name" value="Phosphoglyc_kinase"/>
    <property type="match status" value="1"/>
</dbReference>
<dbReference type="InterPro" id="IPR001576">
    <property type="entry name" value="Phosphoglycerate_kinase"/>
</dbReference>
<dbReference type="InterPro" id="IPR015911">
    <property type="entry name" value="Phosphoglycerate_kinase_CS"/>
</dbReference>
<dbReference type="InterPro" id="IPR015824">
    <property type="entry name" value="Phosphoglycerate_kinase_N"/>
</dbReference>
<dbReference type="InterPro" id="IPR036043">
    <property type="entry name" value="Phosphoglycerate_kinase_sf"/>
</dbReference>
<dbReference type="PANTHER" id="PTHR11406">
    <property type="entry name" value="PHOSPHOGLYCERATE KINASE"/>
    <property type="match status" value="1"/>
</dbReference>
<dbReference type="PANTHER" id="PTHR11406:SF23">
    <property type="entry name" value="PHOSPHOGLYCERATE KINASE 1, CHLOROPLASTIC-RELATED"/>
    <property type="match status" value="1"/>
</dbReference>
<dbReference type="Pfam" id="PF00162">
    <property type="entry name" value="PGK"/>
    <property type="match status" value="1"/>
</dbReference>
<dbReference type="PIRSF" id="PIRSF000724">
    <property type="entry name" value="Pgk"/>
    <property type="match status" value="1"/>
</dbReference>
<dbReference type="PRINTS" id="PR00477">
    <property type="entry name" value="PHGLYCKINASE"/>
</dbReference>
<dbReference type="SUPFAM" id="SSF53748">
    <property type="entry name" value="Phosphoglycerate kinase"/>
    <property type="match status" value="1"/>
</dbReference>
<dbReference type="PROSITE" id="PS00111">
    <property type="entry name" value="PGLYCERATE_KINASE"/>
    <property type="match status" value="1"/>
</dbReference>